<reference key="1">
    <citation type="journal article" date="2004" name="Toxicon">
        <title>A new hemorrhagic metalloprotease from Bothrops jararacussu snake venom: isolation and biochemical characterization.</title>
        <authorList>
            <person name="Mazzi M.V."/>
            <person name="Marcussi S."/>
            <person name="Carlos G.B."/>
            <person name="Stabeli R.G."/>
            <person name="Franco J.J."/>
            <person name="Ticli F.K."/>
            <person name="Cintra A.C.O."/>
            <person name="Franca S.C."/>
            <person name="Soares A.M."/>
            <person name="Sampaio S.V."/>
        </authorList>
    </citation>
    <scope>NUCLEOTIDE SEQUENCE [MRNA]</scope>
    <scope>FUNCTION</scope>
    <scope>ACTIVITY REGULATION</scope>
    <scope>BIOPHYSICOCHEMICAL PROPERTIES</scope>
    <source>
        <tissue>Venom</tissue>
        <tissue>Venom gland</tissue>
    </source>
</reference>
<reference key="2">
    <citation type="journal article" date="2007" name="J. Mol. Graph. Model.">
        <title>Molecular characterization and phylogenetic analysis of BjussuMP-I: a RGD-P-III class hemorrhagic metalloprotease from Bothrops jararacussu snake venom.</title>
        <authorList>
            <person name="Mazzi M.V."/>
            <person name="Magro A.J."/>
            <person name="Amui S.F."/>
            <person name="Oliveira C.Z."/>
            <person name="Ticli F.K."/>
            <person name="Stabeli R.G."/>
            <person name="Fuly A.L."/>
            <person name="Rosa J.C."/>
            <person name="Braz A.S.K."/>
            <person name="Fontes M.R.M."/>
            <person name="Sampaio S.V."/>
            <person name="Soares A.M."/>
        </authorList>
    </citation>
    <scope>FUNCTION</scope>
    <scope>PROTEIN SEQUENCE OF 134-154</scope>
    <scope>3D-STRUCTURE MODELING</scope>
    <source>
        <tissue>Venom</tissue>
    </source>
</reference>
<evidence type="ECO:0000250" key="1"/>
<evidence type="ECO:0000255" key="2"/>
<evidence type="ECO:0000255" key="3">
    <source>
        <dbReference type="PROSITE-ProRule" id="PRU00068"/>
    </source>
</evidence>
<evidence type="ECO:0000255" key="4">
    <source>
        <dbReference type="PROSITE-ProRule" id="PRU00276"/>
    </source>
</evidence>
<evidence type="ECO:0000255" key="5">
    <source>
        <dbReference type="PROSITE-ProRule" id="PRU10095"/>
    </source>
</evidence>
<evidence type="ECO:0000269" key="6">
    <source>
    </source>
</evidence>
<evidence type="ECO:0000269" key="7">
    <source>
    </source>
</evidence>
<evidence type="ECO:0000305" key="8"/>
<feature type="propeptide" id="PRO_0000329987" evidence="7">
    <location>
        <begin position="1" status="less than"/>
        <end position="133"/>
    </location>
</feature>
<feature type="chain" id="PRO_0000329988" description="Zinc metalloproteinase-disintegrin-like BjussuMP-1">
    <location>
        <begin position="134"/>
        <end position="547"/>
    </location>
</feature>
<feature type="domain" description="Peptidase M12B" evidence="4">
    <location>
        <begin position="141"/>
        <end position="337"/>
    </location>
</feature>
<feature type="domain" description="Disintegrin" evidence="3">
    <location>
        <begin position="339"/>
        <end position="421"/>
    </location>
</feature>
<feature type="active site" evidence="4 5">
    <location>
        <position position="278"/>
    </location>
</feature>
<feature type="binding site" evidence="1">
    <location>
        <position position="144"/>
    </location>
    <ligand>
        <name>Ca(2+)</name>
        <dbReference type="ChEBI" id="CHEBI:29108"/>
        <label>1</label>
    </ligand>
</feature>
<feature type="binding site" evidence="1">
    <location>
        <position position="228"/>
    </location>
    <ligand>
        <name>Ca(2+)</name>
        <dbReference type="ChEBI" id="CHEBI:29108"/>
        <label>1</label>
    </ligand>
</feature>
<feature type="binding site" evidence="1">
    <location>
        <position position="277"/>
    </location>
    <ligand>
        <name>Zn(2+)</name>
        <dbReference type="ChEBI" id="CHEBI:29105"/>
        <note>catalytic</note>
    </ligand>
</feature>
<feature type="binding site" evidence="1">
    <location>
        <position position="281"/>
    </location>
    <ligand>
        <name>Zn(2+)</name>
        <dbReference type="ChEBI" id="CHEBI:29105"/>
        <note>catalytic</note>
    </ligand>
</feature>
<feature type="binding site" evidence="1">
    <location>
        <position position="287"/>
    </location>
    <ligand>
        <name>Zn(2+)</name>
        <dbReference type="ChEBI" id="CHEBI:29105"/>
        <note>catalytic</note>
    </ligand>
</feature>
<feature type="binding site" evidence="1">
    <location>
        <position position="332"/>
    </location>
    <ligand>
        <name>Ca(2+)</name>
        <dbReference type="ChEBI" id="CHEBI:29108"/>
        <label>1</label>
    </ligand>
</feature>
<feature type="binding site" evidence="1">
    <location>
        <position position="335"/>
    </location>
    <ligand>
        <name>Ca(2+)</name>
        <dbReference type="ChEBI" id="CHEBI:29108"/>
        <label>1</label>
    </ligand>
</feature>
<feature type="binding site" evidence="1">
    <location>
        <position position="341"/>
    </location>
    <ligand>
        <name>Ca(2+)</name>
        <dbReference type="ChEBI" id="CHEBI:29108"/>
        <label>2</label>
    </ligand>
</feature>
<feature type="binding site" evidence="1">
    <location>
        <position position="344"/>
    </location>
    <ligand>
        <name>Ca(2+)</name>
        <dbReference type="ChEBI" id="CHEBI:29108"/>
        <label>2</label>
    </ligand>
</feature>
<feature type="binding site" evidence="1">
    <location>
        <position position="346"/>
    </location>
    <ligand>
        <name>Ca(2+)</name>
        <dbReference type="ChEBI" id="CHEBI:29108"/>
        <label>2</label>
    </ligand>
</feature>
<feature type="binding site" evidence="1">
    <location>
        <position position="348"/>
    </location>
    <ligand>
        <name>Ca(2+)</name>
        <dbReference type="ChEBI" id="CHEBI:29108"/>
        <label>2</label>
    </ligand>
</feature>
<feature type="binding site" evidence="1">
    <location>
        <position position="351"/>
    </location>
    <ligand>
        <name>Ca(2+)</name>
        <dbReference type="ChEBI" id="CHEBI:29108"/>
        <label>2</label>
    </ligand>
</feature>
<feature type="binding site" evidence="1">
    <location>
        <position position="354"/>
    </location>
    <ligand>
        <name>Ca(2+)</name>
        <dbReference type="ChEBI" id="CHEBI:29108"/>
        <label>2</label>
    </ligand>
</feature>
<feature type="glycosylation site" description="N-linked (GlcNAc...) asparagine" evidence="2">
    <location>
        <position position="451"/>
    </location>
</feature>
<feature type="glycosylation site" description="N-linked (GlcNAc...) asparagine" evidence="2">
    <location>
        <position position="504"/>
    </location>
</feature>
<feature type="disulfide bond" evidence="1">
    <location>
        <begin position="252"/>
        <end position="332"/>
    </location>
</feature>
<feature type="disulfide bond" evidence="1">
    <location>
        <begin position="292"/>
        <end position="316"/>
    </location>
</feature>
<feature type="disulfide bond" evidence="1">
    <location>
        <begin position="294"/>
        <end position="299"/>
    </location>
</feature>
<feature type="disulfide bond" evidence="1">
    <location>
        <begin position="353"/>
        <end position="363"/>
    </location>
</feature>
<feature type="disulfide bond" evidence="1">
    <location>
        <begin position="362"/>
        <end position="385"/>
    </location>
</feature>
<feature type="disulfide bond" evidence="1">
    <location>
        <begin position="376"/>
        <end position="382"/>
    </location>
</feature>
<feature type="disulfide bond" evidence="1">
    <location>
        <begin position="381"/>
        <end position="406"/>
    </location>
</feature>
<feature type="disulfide bond" evidence="1">
    <location>
        <begin position="394"/>
        <end position="413"/>
    </location>
</feature>
<feature type="disulfide bond" evidence="1">
    <location>
        <begin position="425"/>
        <end position="437"/>
    </location>
</feature>
<feature type="disulfide bond" evidence="1">
    <location>
        <begin position="444"/>
        <end position="494"/>
    </location>
</feature>
<feature type="disulfide bond" evidence="1">
    <location>
        <begin position="459"/>
        <end position="501"/>
    </location>
</feature>
<feature type="disulfide bond" evidence="1">
    <location>
        <begin position="472"/>
        <end position="482"/>
    </location>
</feature>
<feature type="disulfide bond" evidence="1">
    <location>
        <begin position="489"/>
        <end position="526"/>
    </location>
</feature>
<feature type="disulfide bond" evidence="1">
    <location>
        <begin position="520"/>
        <end position="531"/>
    </location>
</feature>
<feature type="sequence conflict" description="In Ref. 2; AA sequence." evidence="8" ref="2">
    <location>
        <position position="149"/>
    </location>
</feature>
<feature type="sequence conflict" description="In Ref. 2; AA sequence." evidence="8" ref="2">
    <original>M</original>
    <variation>H</variation>
    <location>
        <position position="153"/>
    </location>
</feature>
<feature type="non-terminal residue">
    <location>
        <position position="1"/>
    </location>
</feature>
<comment type="function">
    <text evidence="6 7">This protein is a zinc metalloprotease from snake venom that causes hemorrhage in mice after intradermal injection. It inhibits platelet aggregation induced by collagen and ADP. Has moderate edema activity, but no myotoxic activity. It hydrolyzes the Aalpha-chain and more slowly the Bbeta-chain of fibrinogen, without affecting the gamma-chains. It also shows proteolytic activity on casein. It is unable to clot plasma. It also shows bactericidal activity against E.coli and S.aureus.</text>
</comment>
<comment type="cofactor">
    <cofactor evidence="1">
        <name>Zn(2+)</name>
        <dbReference type="ChEBI" id="CHEBI:29105"/>
    </cofactor>
    <text evidence="1">Binds 1 zinc ion per subunit.</text>
</comment>
<comment type="activity regulation">
    <text evidence="6">Completely inhibited by EDTA, EGTA, 1,10-phenanthroline, and partially by beta-mercaptoethanol. Is not inhibited by aprotinin and leupeptin.</text>
</comment>
<comment type="biophysicochemical properties">
    <phDependence>
        <text evidence="6">Optimum pH is 4.5-8.0.</text>
    </phDependence>
    <temperatureDependence>
        <text evidence="6">Optimum temperature is 37 degrees Celsius.</text>
    </temperatureDependence>
</comment>
<comment type="subunit">
    <text evidence="1">Monomer.</text>
</comment>
<comment type="subcellular location">
    <subcellularLocation>
        <location>Secreted</location>
    </subcellularLocation>
</comment>
<comment type="tissue specificity">
    <text>Expressed by the venom gland.</text>
</comment>
<comment type="similarity">
    <text evidence="8">Belongs to the venom metalloproteinase (M12B) family. P-III subfamily. P-IIIa sub-subfamily.</text>
</comment>
<comment type="caution">
    <text evidence="8">The motif D/ECD-tripeptide is missing.</text>
</comment>
<proteinExistence type="evidence at protein level"/>
<sequence>EFKVNGEPVVLHLEKNKGLFSEDYSETHYSPDGRQITTYPPVEDHCYYHGRIENDADSTASISACNGLKGHFKLQGETYLIEPLKLSDSEAHAVYKYENVEKEDEAPKMCGVTETNWEYEEPIKKASKLVVTAEQQKFPYRYVEIVVVVDRRMVTKYNGDLKKIRKWVYELVNIVNNIYRSLNVHVALVGLEIWSKGDKITVQPDSDYTLNSFGEWRERDLLPRKKHDNAQLLTAVVFDGPTIGRAYIAGMCDPRHSVGVVMDHSKENLQVAVTMAHELGHNLGMEHDENQCHCDAPSCVMASVLSVVLSYEFSDCSQNQYQTYLTKHNPQCILNEPLLTVSGNELLEAGEECDCGAPENPCCDAATCKLRPGAQCAEGLCCDQCRFKGAGKICRRARGDNPDDRCTGQSADCPRNRFHRNGQPCLYNHGYCYNGKCPIMFYQCYFLFGSNATVAEDDCFNNNKKGDKYFYCRKENEKYIPCAQEDVKCGRLFCDNKKYPCHYNYSEDLDFGMVDHGTKCADGKVCSNRQCVDVNEAYKSTTVFSLI</sequence>
<name>VM3B1_BOTJR</name>
<organism>
    <name type="scientific">Bothrops jararacussu</name>
    <name type="common">Jararacussu</name>
    <dbReference type="NCBI Taxonomy" id="8726"/>
    <lineage>
        <taxon>Eukaryota</taxon>
        <taxon>Metazoa</taxon>
        <taxon>Chordata</taxon>
        <taxon>Craniata</taxon>
        <taxon>Vertebrata</taxon>
        <taxon>Euteleostomi</taxon>
        <taxon>Lepidosauria</taxon>
        <taxon>Squamata</taxon>
        <taxon>Bifurcata</taxon>
        <taxon>Unidentata</taxon>
        <taxon>Episquamata</taxon>
        <taxon>Toxicofera</taxon>
        <taxon>Serpentes</taxon>
        <taxon>Colubroidea</taxon>
        <taxon>Viperidae</taxon>
        <taxon>Crotalinae</taxon>
        <taxon>Bothrops</taxon>
    </lineage>
</organism>
<keyword id="KW-0044">Antibiotic</keyword>
<keyword id="KW-0929">Antimicrobial</keyword>
<keyword id="KW-0106">Calcium</keyword>
<keyword id="KW-1217">Cell adhesion impairing toxin</keyword>
<keyword id="KW-0903">Direct protein sequencing</keyword>
<keyword id="KW-1015">Disulfide bond</keyword>
<keyword id="KW-1206">Fibrinogenolytic toxin</keyword>
<keyword id="KW-0325">Glycoprotein</keyword>
<keyword id="KW-1200">Hemorrhagic toxin</keyword>
<keyword id="KW-1199">Hemostasis impairing toxin</keyword>
<keyword id="KW-0378">Hydrolase</keyword>
<keyword id="KW-0479">Metal-binding</keyword>
<keyword id="KW-0482">Metalloprotease</keyword>
<keyword id="KW-1201">Platelet aggregation inhibiting toxin</keyword>
<keyword id="KW-0645">Protease</keyword>
<keyword id="KW-0964">Secreted</keyword>
<keyword id="KW-0800">Toxin</keyword>
<keyword id="KW-0862">Zinc</keyword>
<keyword id="KW-0865">Zymogen</keyword>
<accession>Q1PHZ4</accession>
<dbReference type="EC" id="3.4.24.-"/>
<dbReference type="EMBL" id="DQ408681">
    <property type="protein sequence ID" value="ABD73129.1"/>
    <property type="molecule type" value="mRNA"/>
</dbReference>
<dbReference type="SMR" id="Q1PHZ4"/>
<dbReference type="MEROPS" id="M12.338"/>
<dbReference type="GO" id="GO:0005576">
    <property type="term" value="C:extracellular region"/>
    <property type="evidence" value="ECO:0007669"/>
    <property type="project" value="UniProtKB-SubCell"/>
</dbReference>
<dbReference type="GO" id="GO:0005886">
    <property type="term" value="C:plasma membrane"/>
    <property type="evidence" value="ECO:0007669"/>
    <property type="project" value="TreeGrafter"/>
</dbReference>
<dbReference type="GO" id="GO:0046872">
    <property type="term" value="F:metal ion binding"/>
    <property type="evidence" value="ECO:0007669"/>
    <property type="project" value="UniProtKB-KW"/>
</dbReference>
<dbReference type="GO" id="GO:0004222">
    <property type="term" value="F:metalloendopeptidase activity"/>
    <property type="evidence" value="ECO:0007669"/>
    <property type="project" value="InterPro"/>
</dbReference>
<dbReference type="GO" id="GO:0090729">
    <property type="term" value="F:toxin activity"/>
    <property type="evidence" value="ECO:0007669"/>
    <property type="project" value="UniProtKB-KW"/>
</dbReference>
<dbReference type="GO" id="GO:0042742">
    <property type="term" value="P:defense response to bacterium"/>
    <property type="evidence" value="ECO:0007669"/>
    <property type="project" value="UniProtKB-KW"/>
</dbReference>
<dbReference type="GO" id="GO:0006508">
    <property type="term" value="P:proteolysis"/>
    <property type="evidence" value="ECO:0007669"/>
    <property type="project" value="UniProtKB-KW"/>
</dbReference>
<dbReference type="CDD" id="cd04269">
    <property type="entry name" value="ZnMc_adamalysin_II_like"/>
    <property type="match status" value="1"/>
</dbReference>
<dbReference type="FunFam" id="3.40.390.10:FF:000002">
    <property type="entry name" value="Disintegrin and metalloproteinase domain-containing protein 22"/>
    <property type="match status" value="1"/>
</dbReference>
<dbReference type="FunFam" id="4.10.70.10:FF:000005">
    <property type="entry name" value="Zinc metalloproteinase/disintegrin"/>
    <property type="match status" value="1"/>
</dbReference>
<dbReference type="Gene3D" id="3.40.390.10">
    <property type="entry name" value="Collagenase (Catalytic Domain)"/>
    <property type="match status" value="1"/>
</dbReference>
<dbReference type="Gene3D" id="4.10.70.10">
    <property type="entry name" value="Disintegrin domain"/>
    <property type="match status" value="1"/>
</dbReference>
<dbReference type="InterPro" id="IPR006586">
    <property type="entry name" value="ADAM_Cys-rich"/>
</dbReference>
<dbReference type="InterPro" id="IPR018358">
    <property type="entry name" value="Disintegrin_CS"/>
</dbReference>
<dbReference type="InterPro" id="IPR001762">
    <property type="entry name" value="Disintegrin_dom"/>
</dbReference>
<dbReference type="InterPro" id="IPR036436">
    <property type="entry name" value="Disintegrin_dom_sf"/>
</dbReference>
<dbReference type="InterPro" id="IPR024079">
    <property type="entry name" value="MetalloPept_cat_dom_sf"/>
</dbReference>
<dbReference type="InterPro" id="IPR001590">
    <property type="entry name" value="Peptidase_M12B"/>
</dbReference>
<dbReference type="InterPro" id="IPR002870">
    <property type="entry name" value="Peptidase_M12B_N"/>
</dbReference>
<dbReference type="InterPro" id="IPR034027">
    <property type="entry name" value="Reprolysin_adamalysin"/>
</dbReference>
<dbReference type="PANTHER" id="PTHR11905">
    <property type="entry name" value="ADAM A DISINTEGRIN AND METALLOPROTEASE DOMAIN"/>
    <property type="match status" value="1"/>
</dbReference>
<dbReference type="PANTHER" id="PTHR11905:SF32">
    <property type="entry name" value="DISINTEGRIN AND METALLOPROTEINASE DOMAIN-CONTAINING PROTEIN 28"/>
    <property type="match status" value="1"/>
</dbReference>
<dbReference type="Pfam" id="PF08516">
    <property type="entry name" value="ADAM_CR"/>
    <property type="match status" value="1"/>
</dbReference>
<dbReference type="Pfam" id="PF00200">
    <property type="entry name" value="Disintegrin"/>
    <property type="match status" value="1"/>
</dbReference>
<dbReference type="Pfam" id="PF01562">
    <property type="entry name" value="Pep_M12B_propep"/>
    <property type="match status" value="1"/>
</dbReference>
<dbReference type="Pfam" id="PF01421">
    <property type="entry name" value="Reprolysin"/>
    <property type="match status" value="1"/>
</dbReference>
<dbReference type="PRINTS" id="PR00289">
    <property type="entry name" value="DISINTEGRIN"/>
</dbReference>
<dbReference type="SMART" id="SM00608">
    <property type="entry name" value="ACR"/>
    <property type="match status" value="1"/>
</dbReference>
<dbReference type="SMART" id="SM00050">
    <property type="entry name" value="DISIN"/>
    <property type="match status" value="1"/>
</dbReference>
<dbReference type="SUPFAM" id="SSF57552">
    <property type="entry name" value="Blood coagulation inhibitor (disintegrin)"/>
    <property type="match status" value="1"/>
</dbReference>
<dbReference type="SUPFAM" id="SSF55486">
    <property type="entry name" value="Metalloproteases ('zincins'), catalytic domain"/>
    <property type="match status" value="1"/>
</dbReference>
<dbReference type="PROSITE" id="PS50215">
    <property type="entry name" value="ADAM_MEPRO"/>
    <property type="match status" value="1"/>
</dbReference>
<dbReference type="PROSITE" id="PS00427">
    <property type="entry name" value="DISINTEGRIN_1"/>
    <property type="match status" value="1"/>
</dbReference>
<dbReference type="PROSITE" id="PS50214">
    <property type="entry name" value="DISINTEGRIN_2"/>
    <property type="match status" value="1"/>
</dbReference>
<dbReference type="PROSITE" id="PS00142">
    <property type="entry name" value="ZINC_PROTEASE"/>
    <property type="match status" value="1"/>
</dbReference>
<protein>
    <recommendedName>
        <fullName>Zinc metalloproteinase-disintegrin-like BjussuMP-1</fullName>
        <ecNumber>3.4.24.-</ecNumber>
    </recommendedName>
    <alternativeName>
        <fullName>BjussuMP-I</fullName>
    </alternativeName>
    <alternativeName>
        <fullName>Snake venom metalloproteinase</fullName>
        <shortName>SVMP</shortName>
    </alternativeName>
</protein>